<gene>
    <name type="primary">FMO5</name>
</gene>
<feature type="chain" id="PRO_0000147667" description="Flavin-containing monooxygenase 5">
    <location>
        <begin position="1"/>
        <end position="533"/>
    </location>
</feature>
<feature type="transmembrane region" description="Helical" evidence="5">
    <location>
        <begin position="513"/>
        <end position="533"/>
    </location>
</feature>
<feature type="binding site" evidence="4">
    <location>
        <begin position="10"/>
        <end position="14"/>
    </location>
    <ligand>
        <name>FAD</name>
        <dbReference type="ChEBI" id="CHEBI:57692"/>
    </ligand>
</feature>
<feature type="binding site" evidence="4">
    <location>
        <position position="33"/>
    </location>
    <ligand>
        <name>FAD</name>
        <dbReference type="ChEBI" id="CHEBI:57692"/>
    </ligand>
</feature>
<feature type="binding site" evidence="4">
    <location>
        <begin position="41"/>
        <end position="42"/>
    </location>
    <ligand>
        <name>FAD</name>
        <dbReference type="ChEBI" id="CHEBI:57692"/>
    </ligand>
</feature>
<feature type="binding site" evidence="4">
    <location>
        <begin position="62"/>
        <end position="63"/>
    </location>
    <ligand>
        <name>FAD</name>
        <dbReference type="ChEBI" id="CHEBI:57692"/>
    </ligand>
</feature>
<feature type="binding site" evidence="4">
    <location>
        <begin position="196"/>
        <end position="199"/>
    </location>
    <ligand>
        <name>NADP(+)</name>
        <dbReference type="ChEBI" id="CHEBI:58349"/>
    </ligand>
</feature>
<feature type="modified residue" description="Dimethylated arginine" evidence="3">
    <location>
        <position position="5"/>
    </location>
</feature>
<feature type="modified residue" description="Phosphoserine" evidence="1">
    <location>
        <position position="54"/>
    </location>
</feature>
<feature type="modified residue" description="Phosphotyrosine" evidence="1">
    <location>
        <position position="56"/>
    </location>
</feature>
<feature type="modified residue" description="Phosphoserine" evidence="1">
    <location>
        <position position="58"/>
    </location>
</feature>
<feature type="modified residue" description="Phosphoserine" evidence="1">
    <location>
        <position position="280"/>
    </location>
</feature>
<feature type="modified residue" description="Phosphothreonine" evidence="1">
    <location>
        <position position="284"/>
    </location>
</feature>
<feature type="modified residue" description="Phosphoserine" evidence="2">
    <location>
        <position position="401"/>
    </location>
</feature>
<sequence>MAGKRVAVIGAGASGLACIKCCLEEGLEPVCFERTDDIGGLWRFQESPDEGRASIYKSVIINTSKEMMCFSDYPIPDHFPNFMHNSQVLEYFRMYAKEFGLLKYIQFKTTVCSVKKRPDFSTSGQWEVLTECEGKKESAVFDGVLVCTGHHTSAHLPLESFPGIEKFKGQYLHSRDYKNPEKFTGKRVIVIGIGNSGGDLAVEISHTAKQVFLSTRRGAWIMNRVGDHGYPIDILLSSRFSQFLKKITGETIANSFLERKMNQRFDHAMFGLKPKHRALSQHPTVNDDLPNRIISGSVKIKGNVKEFTETAAIFEDGSREDDIDAVIFATGYSFSFPFLEDSVKVVKNKVSLYKKVFPPNLEKPTLAIIGLIQPLGAIMPISELQARWATLVFKGLKTLPSQSEMMTEISQVQEKMAKRYVESQRHTIQGDYIETMEEIADLVGVRPNLLSLAFTDPRLALQLLLGPCTPVHYRLQGRGKWDGARKTILTVEDRIRKPLMTRVTESSNSVTSMMTMGKFMLAIAFLAIAVVYF</sequence>
<protein>
    <recommendedName>
        <fullName>Flavin-containing monooxygenase 5</fullName>
        <shortName>FMO 5</shortName>
    </recommendedName>
    <alternativeName>
        <fullName evidence="7">Dimethylaniline monooxygenase [N-oxide-forming] 5</fullName>
        <ecNumber evidence="6">1.14.13.8</ecNumber>
    </alternativeName>
    <alternativeName>
        <fullName>Dimethylaniline oxidase 5</fullName>
    </alternativeName>
    <alternativeName>
        <fullName>FMO 1C1</fullName>
    </alternativeName>
    <alternativeName>
        <fullName>FMO form 3</fullName>
    </alternativeName>
    <alternativeName>
        <fullName>Hepatic flavin-containing monooxygenase 5</fullName>
    </alternativeName>
    <alternativeName>
        <fullName evidence="1">NADPH oxidase</fullName>
        <ecNumber evidence="1">1.6.3.1</ecNumber>
    </alternativeName>
</protein>
<comment type="function">
    <text evidence="1 2 6">Acts as a Baeyer-Villiger monooxygenase on a broad range of substrates. Catalyzes the insertion of an oxygen atom into a carbon-carbon bond adjacent to a carbonyl, which converts ketones to esters (By similarity). Active on diverse carbonyl compounds, whereas soft nucleophiles are mostly non- or poorly reactive. In contrast with other forms of FMO it is non- or poorly active on 'classical' substrates such as drugs, pesticides, and dietary components containing soft nucleophilic heteroatoms (PubMed:7872795). Able to oxidize drug molecules bearing a carbonyl group on an aliphatic chain, such as nabumetone and pentoxifylline. Also, in the absence of substrates, shows slow but yet significant NADPH oxidase activity (By similarity). Acts as a positive modulator of cholesterol biosynthesis as well as glucose homeostasis, promoting metabolic aging via pleiotropic effects (By similarity).</text>
</comment>
<comment type="catalytic activity">
    <reaction evidence="6">
        <text>N,N-dimethylaniline + NADPH + O2 + H(+) = N,N-dimethylaniline N-oxide + NADP(+) + H2O</text>
        <dbReference type="Rhea" id="RHEA:24468"/>
        <dbReference type="ChEBI" id="CHEBI:15377"/>
        <dbReference type="ChEBI" id="CHEBI:15378"/>
        <dbReference type="ChEBI" id="CHEBI:15379"/>
        <dbReference type="ChEBI" id="CHEBI:16269"/>
        <dbReference type="ChEBI" id="CHEBI:17735"/>
        <dbReference type="ChEBI" id="CHEBI:57783"/>
        <dbReference type="ChEBI" id="CHEBI:58349"/>
        <dbReference type="EC" id="1.14.13.8"/>
    </reaction>
    <physiologicalReaction direction="left-to-right" evidence="8">
        <dbReference type="Rhea" id="RHEA:24469"/>
    </physiologicalReaction>
</comment>
<comment type="catalytic activity">
    <reaction evidence="1">
        <text>NADPH + O2 + H(+) = H2O2 + NADP(+)</text>
        <dbReference type="Rhea" id="RHEA:11260"/>
        <dbReference type="ChEBI" id="CHEBI:15378"/>
        <dbReference type="ChEBI" id="CHEBI:15379"/>
        <dbReference type="ChEBI" id="CHEBI:16240"/>
        <dbReference type="ChEBI" id="CHEBI:57783"/>
        <dbReference type="ChEBI" id="CHEBI:58349"/>
        <dbReference type="EC" id="1.6.3.1"/>
    </reaction>
    <physiologicalReaction direction="left-to-right" evidence="1">
        <dbReference type="Rhea" id="RHEA:11261"/>
    </physiologicalReaction>
</comment>
<comment type="catalytic activity">
    <reaction evidence="1">
        <text>heptan-2-one + NADPH + O2 + H(+) = pentyl acetate + NADP(+) + H2O</text>
        <dbReference type="Rhea" id="RHEA:54836"/>
        <dbReference type="ChEBI" id="CHEBI:5672"/>
        <dbReference type="ChEBI" id="CHEBI:15377"/>
        <dbReference type="ChEBI" id="CHEBI:15378"/>
        <dbReference type="ChEBI" id="CHEBI:15379"/>
        <dbReference type="ChEBI" id="CHEBI:57783"/>
        <dbReference type="ChEBI" id="CHEBI:58349"/>
        <dbReference type="ChEBI" id="CHEBI:87362"/>
    </reaction>
    <physiologicalReaction direction="left-to-right" evidence="1">
        <dbReference type="Rhea" id="RHEA:54837"/>
    </physiologicalReaction>
</comment>
<comment type="catalytic activity">
    <reaction evidence="1">
        <text>octan-3-one + NADPH + O2 + H(+) = pentyl propanoate + NADP(+) + H2O</text>
        <dbReference type="Rhea" id="RHEA:54840"/>
        <dbReference type="ChEBI" id="CHEBI:15377"/>
        <dbReference type="ChEBI" id="CHEBI:15378"/>
        <dbReference type="ChEBI" id="CHEBI:15379"/>
        <dbReference type="ChEBI" id="CHEBI:57783"/>
        <dbReference type="ChEBI" id="CHEBI:58349"/>
        <dbReference type="ChEBI" id="CHEBI:80946"/>
        <dbReference type="ChEBI" id="CHEBI:87373"/>
    </reaction>
    <physiologicalReaction direction="left-to-right" evidence="1">
        <dbReference type="Rhea" id="RHEA:54841"/>
    </physiologicalReaction>
</comment>
<comment type="catalytic activity">
    <reaction evidence="1">
        <text>octan-3-one + NADPH + O2 + H(+) = ethyl hexanoate + NADP(+) + H2O</text>
        <dbReference type="Rhea" id="RHEA:54856"/>
        <dbReference type="ChEBI" id="CHEBI:15377"/>
        <dbReference type="ChEBI" id="CHEBI:15378"/>
        <dbReference type="ChEBI" id="CHEBI:15379"/>
        <dbReference type="ChEBI" id="CHEBI:57783"/>
        <dbReference type="ChEBI" id="CHEBI:58349"/>
        <dbReference type="ChEBI" id="CHEBI:80946"/>
        <dbReference type="ChEBI" id="CHEBI:86055"/>
    </reaction>
    <physiologicalReaction direction="left-to-right" evidence="1">
        <dbReference type="Rhea" id="RHEA:54857"/>
    </physiologicalReaction>
</comment>
<comment type="catalytic activity">
    <reaction evidence="1">
        <text>hexan-3-one + NADPH + O2 + H(+) = ethyl butanoate + NADP(+) + H2O</text>
        <dbReference type="Rhea" id="RHEA:54844"/>
        <dbReference type="ChEBI" id="CHEBI:15377"/>
        <dbReference type="ChEBI" id="CHEBI:15378"/>
        <dbReference type="ChEBI" id="CHEBI:15379"/>
        <dbReference type="ChEBI" id="CHEBI:57783"/>
        <dbReference type="ChEBI" id="CHEBI:58349"/>
        <dbReference type="ChEBI" id="CHEBI:88764"/>
        <dbReference type="ChEBI" id="CHEBI:89891"/>
    </reaction>
    <physiologicalReaction direction="left-to-right" evidence="1">
        <dbReference type="Rhea" id="RHEA:54845"/>
    </physiologicalReaction>
</comment>
<comment type="catalytic activity">
    <reaction evidence="1">
        <text>hexan-3-one + NADPH + O2 + H(+) = propyl propanoate + NADP(+) + H2O</text>
        <dbReference type="Rhea" id="RHEA:54848"/>
        <dbReference type="ChEBI" id="CHEBI:15377"/>
        <dbReference type="ChEBI" id="CHEBI:15378"/>
        <dbReference type="ChEBI" id="CHEBI:15379"/>
        <dbReference type="ChEBI" id="CHEBI:57783"/>
        <dbReference type="ChEBI" id="CHEBI:58349"/>
        <dbReference type="ChEBI" id="CHEBI:89828"/>
        <dbReference type="ChEBI" id="CHEBI:89891"/>
    </reaction>
    <physiologicalReaction direction="left-to-right" evidence="1">
        <dbReference type="Rhea" id="RHEA:54849"/>
    </physiologicalReaction>
</comment>
<comment type="catalytic activity">
    <reaction evidence="1">
        <text>heptan-4-one + NADPH + O2 + H(+) = propyl butanoate + NADP(+) + H2O</text>
        <dbReference type="Rhea" id="RHEA:54852"/>
        <dbReference type="ChEBI" id="CHEBI:15377"/>
        <dbReference type="ChEBI" id="CHEBI:15378"/>
        <dbReference type="ChEBI" id="CHEBI:15379"/>
        <dbReference type="ChEBI" id="CHEBI:57783"/>
        <dbReference type="ChEBI" id="CHEBI:58349"/>
        <dbReference type="ChEBI" id="CHEBI:89484"/>
        <dbReference type="ChEBI" id="CHEBI:89719"/>
    </reaction>
    <physiologicalReaction direction="left-to-right" evidence="1">
        <dbReference type="Rhea" id="RHEA:54853"/>
    </physiologicalReaction>
</comment>
<comment type="catalytic activity">
    <reaction evidence="1">
        <text>(2E)-geranial + NADPH + O2 + H(+) = (1E)-2,6-dimethylhepta-1,5-dien-1-yl formate + NADP(+) + H2O</text>
        <dbReference type="Rhea" id="RHEA:54860"/>
        <dbReference type="ChEBI" id="CHEBI:15377"/>
        <dbReference type="ChEBI" id="CHEBI:15378"/>
        <dbReference type="ChEBI" id="CHEBI:15379"/>
        <dbReference type="ChEBI" id="CHEBI:16980"/>
        <dbReference type="ChEBI" id="CHEBI:57783"/>
        <dbReference type="ChEBI" id="CHEBI:58349"/>
        <dbReference type="ChEBI" id="CHEBI:138375"/>
    </reaction>
    <physiologicalReaction direction="left-to-right" evidence="1">
        <dbReference type="Rhea" id="RHEA:54861"/>
    </physiologicalReaction>
</comment>
<comment type="catalytic activity">
    <reaction evidence="1">
        <text>sulcatone + NADPH + O2 + H(+) = 4-methylpent-3-en-1-yl acetate + NADP(+) + H2O</text>
        <dbReference type="Rhea" id="RHEA:54864"/>
        <dbReference type="ChEBI" id="CHEBI:15377"/>
        <dbReference type="ChEBI" id="CHEBI:15378"/>
        <dbReference type="ChEBI" id="CHEBI:15379"/>
        <dbReference type="ChEBI" id="CHEBI:16310"/>
        <dbReference type="ChEBI" id="CHEBI:57783"/>
        <dbReference type="ChEBI" id="CHEBI:58349"/>
        <dbReference type="ChEBI" id="CHEBI:138373"/>
    </reaction>
    <physiologicalReaction direction="left-to-right" evidence="1">
        <dbReference type="Rhea" id="RHEA:54865"/>
    </physiologicalReaction>
</comment>
<comment type="cofactor">
    <cofactor>
        <name>FAD</name>
        <dbReference type="ChEBI" id="CHEBI:57692"/>
    </cofactor>
</comment>
<comment type="subcellular location">
    <subcellularLocation>
        <location evidence="1">Microsome membrane</location>
    </subcellularLocation>
    <subcellularLocation>
        <location evidence="1">Endoplasmic reticulum membrane</location>
    </subcellularLocation>
</comment>
<comment type="tissue specificity">
    <text evidence="6">Kidney and liver.</text>
</comment>
<comment type="similarity">
    <text evidence="7">Belongs to the FMO family.</text>
</comment>
<reference key="1">
    <citation type="journal article" date="1993" name="J. Biol. Chem.">
        <title>Cloning, sequencing, distribution, and expression in Escherichia coli of flavin-containing monooxygenase 1C1. Evidence for a third gene subfamily in rabbits.</title>
        <authorList>
            <person name="Atta-Asafo-Adjei E."/>
            <person name="Lawton M.P."/>
            <person name="Philpot R.M."/>
        </authorList>
    </citation>
    <scope>NUCLEOTIDE SEQUENCE [MRNA]</scope>
    <source>
        <tissue>Liver</tissue>
    </source>
</reference>
<reference key="2">
    <citation type="journal article" date="1995" name="Arch. Biochem. Biophys.">
        <title>Characterization of flavin-containing monooxygenase 5 (FMO5) cloned from human and guinea pig: evidence that the unique catalytic properties of FMO5 are not confined to the rabbit ortholog.</title>
        <authorList>
            <person name="Overby L.H."/>
            <person name="Buckpitt A.R."/>
            <person name="Lawton M.P."/>
            <person name="Atta-Asafo-Adjei E."/>
            <person name="Schulze J."/>
            <person name="Philpot R.M."/>
        </authorList>
    </citation>
    <scope>TISSUE SPECIFICITY</scope>
    <scope>CATALYTIC ACTIVITY</scope>
    <scope>FUNCTION</scope>
    <source>
        <strain>Hartley</strain>
        <tissue>Liver</tissue>
    </source>
</reference>
<keyword id="KW-0256">Endoplasmic reticulum</keyword>
<keyword id="KW-0274">FAD</keyword>
<keyword id="KW-0285">Flavoprotein</keyword>
<keyword id="KW-0443">Lipid metabolism</keyword>
<keyword id="KW-0472">Membrane</keyword>
<keyword id="KW-0488">Methylation</keyword>
<keyword id="KW-0492">Microsome</keyword>
<keyword id="KW-0503">Monooxygenase</keyword>
<keyword id="KW-0521">NADP</keyword>
<keyword id="KW-0560">Oxidoreductase</keyword>
<keyword id="KW-0597">Phosphoprotein</keyword>
<keyword id="KW-1185">Reference proteome</keyword>
<keyword id="KW-0812">Transmembrane</keyword>
<keyword id="KW-1133">Transmembrane helix</keyword>
<accession>Q04799</accession>
<dbReference type="EC" id="1.14.13.8" evidence="6"/>
<dbReference type="EC" id="1.6.3.1" evidence="1"/>
<dbReference type="EMBL" id="L08449">
    <property type="protein sequence ID" value="AAA31235.1"/>
    <property type="molecule type" value="mRNA"/>
</dbReference>
<dbReference type="PIR" id="A45912">
    <property type="entry name" value="A45912"/>
</dbReference>
<dbReference type="PIR" id="A46677">
    <property type="entry name" value="A46677"/>
</dbReference>
<dbReference type="RefSeq" id="NP_001075714.1">
    <property type="nucleotide sequence ID" value="NM_001082245.1"/>
</dbReference>
<dbReference type="SMR" id="Q04799"/>
<dbReference type="FunCoup" id="Q04799">
    <property type="interactions" value="576"/>
</dbReference>
<dbReference type="STRING" id="9986.ENSOCUP00000008053"/>
<dbReference type="PaxDb" id="9986-ENSOCUP00000008053"/>
<dbReference type="GeneID" id="100009064"/>
<dbReference type="KEGG" id="ocu:100009064"/>
<dbReference type="CTD" id="2330"/>
<dbReference type="eggNOG" id="KOG1399">
    <property type="taxonomic scope" value="Eukaryota"/>
</dbReference>
<dbReference type="InParanoid" id="Q04799"/>
<dbReference type="OrthoDB" id="66881at2759"/>
<dbReference type="Proteomes" id="UP000001811">
    <property type="component" value="Unplaced"/>
</dbReference>
<dbReference type="GO" id="GO:0005789">
    <property type="term" value="C:endoplasmic reticulum membrane"/>
    <property type="evidence" value="ECO:0007669"/>
    <property type="project" value="UniProtKB-SubCell"/>
</dbReference>
<dbReference type="GO" id="GO:0050660">
    <property type="term" value="F:flavin adenine dinucleotide binding"/>
    <property type="evidence" value="ECO:0007669"/>
    <property type="project" value="InterPro"/>
</dbReference>
<dbReference type="GO" id="GO:0004497">
    <property type="term" value="F:monooxygenase activity"/>
    <property type="evidence" value="ECO:0000250"/>
    <property type="project" value="UniProtKB"/>
</dbReference>
<dbReference type="GO" id="GO:0004499">
    <property type="term" value="F:N,N-dimethylaniline monooxygenase activity"/>
    <property type="evidence" value="ECO:0007669"/>
    <property type="project" value="InterPro"/>
</dbReference>
<dbReference type="GO" id="GO:0050661">
    <property type="term" value="F:NADP binding"/>
    <property type="evidence" value="ECO:0007669"/>
    <property type="project" value="InterPro"/>
</dbReference>
<dbReference type="GO" id="GO:0106294">
    <property type="term" value="F:NADPH oxidase H202-forming activity"/>
    <property type="evidence" value="ECO:0007669"/>
    <property type="project" value="RHEA"/>
</dbReference>
<dbReference type="GO" id="GO:0006629">
    <property type="term" value="P:lipid metabolic process"/>
    <property type="evidence" value="ECO:0007669"/>
    <property type="project" value="UniProtKB-KW"/>
</dbReference>
<dbReference type="GO" id="GO:0090181">
    <property type="term" value="P:regulation of cholesterol metabolic process"/>
    <property type="evidence" value="ECO:0000250"/>
    <property type="project" value="UniProtKB"/>
</dbReference>
<dbReference type="GO" id="GO:0006805">
    <property type="term" value="P:xenobiotic metabolic process"/>
    <property type="evidence" value="ECO:0000250"/>
    <property type="project" value="UniProtKB"/>
</dbReference>
<dbReference type="FunFam" id="3.50.50.60:FF:000042">
    <property type="entry name" value="Dimethylaniline monooxygenase [N-oxide-forming]"/>
    <property type="match status" value="1"/>
</dbReference>
<dbReference type="FunFam" id="3.50.50.60:FF:000073">
    <property type="entry name" value="Dimethylaniline monooxygenase [N-oxide-forming]"/>
    <property type="match status" value="1"/>
</dbReference>
<dbReference type="FunFam" id="3.50.50.60:FF:000409">
    <property type="entry name" value="Dimethylaniline monooxygenase [N-oxide-forming]"/>
    <property type="match status" value="1"/>
</dbReference>
<dbReference type="Gene3D" id="3.50.50.60">
    <property type="entry name" value="FAD/NAD(P)-binding domain"/>
    <property type="match status" value="2"/>
</dbReference>
<dbReference type="InterPro" id="IPR036188">
    <property type="entry name" value="FAD/NAD-bd_sf"/>
</dbReference>
<dbReference type="InterPro" id="IPR000960">
    <property type="entry name" value="Flavin_mOase"/>
</dbReference>
<dbReference type="InterPro" id="IPR020946">
    <property type="entry name" value="Flavin_mOase-like"/>
</dbReference>
<dbReference type="InterPro" id="IPR002257">
    <property type="entry name" value="Flavin_mOase_5"/>
</dbReference>
<dbReference type="InterPro" id="IPR050346">
    <property type="entry name" value="FMO-like"/>
</dbReference>
<dbReference type="PANTHER" id="PTHR23023">
    <property type="entry name" value="DIMETHYLANILINE MONOOXYGENASE"/>
    <property type="match status" value="1"/>
</dbReference>
<dbReference type="Pfam" id="PF00743">
    <property type="entry name" value="FMO-like"/>
    <property type="match status" value="1"/>
</dbReference>
<dbReference type="PIRSF" id="PIRSF000332">
    <property type="entry name" value="FMO"/>
    <property type="match status" value="1"/>
</dbReference>
<dbReference type="PRINTS" id="PR00370">
    <property type="entry name" value="FMOXYGENASE"/>
</dbReference>
<dbReference type="PRINTS" id="PR01125">
    <property type="entry name" value="FMOXYGENASE5"/>
</dbReference>
<dbReference type="SUPFAM" id="SSF51905">
    <property type="entry name" value="FAD/NAD(P)-binding domain"/>
    <property type="match status" value="2"/>
</dbReference>
<evidence type="ECO:0000250" key="1">
    <source>
        <dbReference type="UniProtKB" id="P49326"/>
    </source>
</evidence>
<evidence type="ECO:0000250" key="2">
    <source>
        <dbReference type="UniProtKB" id="P97872"/>
    </source>
</evidence>
<evidence type="ECO:0000250" key="3">
    <source>
        <dbReference type="UniProtKB" id="Q8K4C0"/>
    </source>
</evidence>
<evidence type="ECO:0000250" key="4">
    <source>
        <dbReference type="UniProtKB" id="Q9HFE4"/>
    </source>
</evidence>
<evidence type="ECO:0000255" key="5"/>
<evidence type="ECO:0000269" key="6">
    <source>
    </source>
</evidence>
<evidence type="ECO:0000305" key="7"/>
<evidence type="ECO:0000305" key="8">
    <source>
    </source>
</evidence>
<proteinExistence type="evidence at protein level"/>
<name>FMO5_RABIT</name>
<organism>
    <name type="scientific">Oryctolagus cuniculus</name>
    <name type="common">Rabbit</name>
    <dbReference type="NCBI Taxonomy" id="9986"/>
    <lineage>
        <taxon>Eukaryota</taxon>
        <taxon>Metazoa</taxon>
        <taxon>Chordata</taxon>
        <taxon>Craniata</taxon>
        <taxon>Vertebrata</taxon>
        <taxon>Euteleostomi</taxon>
        <taxon>Mammalia</taxon>
        <taxon>Eutheria</taxon>
        <taxon>Euarchontoglires</taxon>
        <taxon>Glires</taxon>
        <taxon>Lagomorpha</taxon>
        <taxon>Leporidae</taxon>
        <taxon>Oryctolagus</taxon>
    </lineage>
</organism>